<evidence type="ECO:0000250" key="1"/>
<evidence type="ECO:0000305" key="2"/>
<name>PHAA2_NOSS1</name>
<reference key="1">
    <citation type="journal article" date="2001" name="DNA Res.">
        <title>Complete genomic sequence of the filamentous nitrogen-fixing cyanobacterium Anabaena sp. strain PCC 7120.</title>
        <authorList>
            <person name="Kaneko T."/>
            <person name="Nakamura Y."/>
            <person name="Wolk C.P."/>
            <person name="Kuritz T."/>
            <person name="Sasamoto S."/>
            <person name="Watanabe A."/>
            <person name="Iriguchi M."/>
            <person name="Ishikawa A."/>
            <person name="Kawashima K."/>
            <person name="Kimura T."/>
            <person name="Kishida Y."/>
            <person name="Kohara M."/>
            <person name="Matsumoto M."/>
            <person name="Matsuno A."/>
            <person name="Muraki A."/>
            <person name="Nakazaki N."/>
            <person name="Shimpo S."/>
            <person name="Sugimoto M."/>
            <person name="Takazawa M."/>
            <person name="Yamada M."/>
            <person name="Yasuda M."/>
            <person name="Tabata S."/>
        </authorList>
    </citation>
    <scope>NUCLEOTIDE SEQUENCE [LARGE SCALE GENOMIC DNA]</scope>
    <source>
        <strain>PCC 7120 / SAG 25.82 / UTEX 2576</strain>
    </source>
</reference>
<reference key="2">
    <citation type="journal article" date="2007" name="Proc. Natl. Acad. Sci. U.S.A.">
        <title>Phycobilin:cystein-84 biliprotein lyase, a near-universal lyase for cysteine-84-binding sites in cyanobacterial phycobiliproteins.</title>
        <authorList>
            <person name="Zhao K.H."/>
            <person name="Su P."/>
            <person name="Tu J.M."/>
            <person name="Wang X."/>
            <person name="Liu H."/>
            <person name="Ploscher M."/>
            <person name="Eichacker L."/>
            <person name="Yang B."/>
            <person name="Zhou M."/>
            <person name="Scheer H."/>
        </authorList>
    </citation>
    <scope>POSSIBLE CHROMOPHORE ATTACHMENT</scope>
    <source>
        <strain>PCC 7120 / SAG 25.82 / UTEX 2576</strain>
    </source>
</reference>
<accession>Q8YZK7</accession>
<sequence length="161" mass="17945">MSLIIKSILNADAEARYFRPGELAQIKGFNASAASRLRLVQALTENRERIVKQSANQLFQKRPDIVSPGGNAYGQDMTATCLRDMDYYLRLITYSIVAGDSTPIQEIGVIGVREMYRSLGTPIEAVAESIRAMKYVATSMMSVEDRAEVDTYFDYLIGAMQ</sequence>
<dbReference type="EMBL" id="BA000019">
    <property type="protein sequence ID" value="BAB72408.1"/>
    <property type="molecule type" value="Genomic_DNA"/>
</dbReference>
<dbReference type="PIR" id="AI1862">
    <property type="entry name" value="AI1862"/>
</dbReference>
<dbReference type="RefSeq" id="WP_010994626.1">
    <property type="nucleotide sequence ID" value="NZ_RSCN01000024.1"/>
</dbReference>
<dbReference type="SMR" id="Q8YZK7"/>
<dbReference type="STRING" id="103690.gene:10492459"/>
<dbReference type="KEGG" id="ana:all0450"/>
<dbReference type="eggNOG" id="ENOG502Z7RG">
    <property type="taxonomic scope" value="Bacteria"/>
</dbReference>
<dbReference type="OrthoDB" id="512145at2"/>
<dbReference type="Proteomes" id="UP000002483">
    <property type="component" value="Chromosome"/>
</dbReference>
<dbReference type="GO" id="GO:0030089">
    <property type="term" value="C:phycobilisome"/>
    <property type="evidence" value="ECO:0007669"/>
    <property type="project" value="UniProtKB-KW"/>
</dbReference>
<dbReference type="GO" id="GO:0031676">
    <property type="term" value="C:plasma membrane-derived thylakoid membrane"/>
    <property type="evidence" value="ECO:0007669"/>
    <property type="project" value="UniProtKB-SubCell"/>
</dbReference>
<dbReference type="GO" id="GO:0015979">
    <property type="term" value="P:photosynthesis"/>
    <property type="evidence" value="ECO:0007669"/>
    <property type="project" value="UniProtKB-KW"/>
</dbReference>
<dbReference type="Gene3D" id="1.10.490.20">
    <property type="entry name" value="Phycocyanins"/>
    <property type="match status" value="1"/>
</dbReference>
<dbReference type="InterPro" id="IPR009050">
    <property type="entry name" value="Globin-like_sf"/>
</dbReference>
<dbReference type="InterPro" id="IPR012128">
    <property type="entry name" value="Phycobilisome_asu/bsu"/>
</dbReference>
<dbReference type="InterPro" id="IPR038719">
    <property type="entry name" value="Phycobilisome_asu/bsu_sf"/>
</dbReference>
<dbReference type="PANTHER" id="PTHR34011:SF2">
    <property type="entry name" value="ALLOPHYCOCYANIN ALPHA CHAIN"/>
    <property type="match status" value="1"/>
</dbReference>
<dbReference type="PANTHER" id="PTHR34011">
    <property type="entry name" value="PHYCOBILISOME 32.1 KDA LINKER POLYPEPTIDE, PHYCOCYANIN-ASSOCIATED, ROD 2-RELATED"/>
    <property type="match status" value="1"/>
</dbReference>
<dbReference type="Pfam" id="PF00502">
    <property type="entry name" value="Phycobilisome"/>
    <property type="match status" value="1"/>
</dbReference>
<dbReference type="PIRSF" id="PIRSF000081">
    <property type="entry name" value="Phycocyanin"/>
    <property type="match status" value="1"/>
</dbReference>
<dbReference type="SUPFAM" id="SSF46458">
    <property type="entry name" value="Globin-like"/>
    <property type="match status" value="1"/>
</dbReference>
<feature type="chain" id="PRO_0000403174" description="Putative allophycocyanin subunit alpha 2">
    <location>
        <begin position="1"/>
        <end position="161"/>
    </location>
</feature>
<feature type="binding site" description="covalent" evidence="1">
    <location>
        <position position="81"/>
    </location>
    <ligand>
        <name>(2R,3E)-phycocyanobilin</name>
        <dbReference type="ChEBI" id="CHEBI:85275"/>
    </ligand>
</feature>
<feature type="modified residue" description="N4-methylasparagine" evidence="1">
    <location>
        <position position="71"/>
    </location>
</feature>
<protein>
    <recommendedName>
        <fullName>Putative allophycocyanin subunit alpha 2</fullName>
    </recommendedName>
</protein>
<comment type="function">
    <text evidence="1">Light-harvesting photosynthetic bile pigment-protein from the phycobiliprotein complex. Allophycocyanin has a maximum absorption at approximately 650 to 653 nanometers (By similarity).</text>
</comment>
<comment type="subunit">
    <text evidence="1">Heterohexamer of two alpha chains, one alpha-B chain and three beta chains.</text>
</comment>
<comment type="subcellular location">
    <subcellularLocation>
        <location>Cellular thylakoid membrane</location>
        <topology>Peripheral membrane protein</topology>
        <orientation>Cytoplasmic side</orientation>
    </subcellularLocation>
    <text evidence="1">Forms the core of the phycobilisome.</text>
</comment>
<comment type="PTM">
    <text evidence="1">Contains one covalently linked phycocyanobilin chromophore (By similarity). The chromophore is added by phycocyanobilin lyase CpcS 1.</text>
</comment>
<comment type="similarity">
    <text evidence="2">Belongs to the phycobiliprotein family.</text>
</comment>
<comment type="caution">
    <text evidence="2">While chromophore attachment has been shown in a purified system in vitro, this chromoprotein has never been isolated in vivo.</text>
</comment>
<organism>
    <name type="scientific">Nostoc sp. (strain PCC 7120 / SAG 25.82 / UTEX 2576)</name>
    <dbReference type="NCBI Taxonomy" id="103690"/>
    <lineage>
        <taxon>Bacteria</taxon>
        <taxon>Bacillati</taxon>
        <taxon>Cyanobacteriota</taxon>
        <taxon>Cyanophyceae</taxon>
        <taxon>Nostocales</taxon>
        <taxon>Nostocaceae</taxon>
        <taxon>Nostoc</taxon>
    </lineage>
</organism>
<keyword id="KW-0042">Antenna complex</keyword>
<keyword id="KW-0089">Bile pigment</keyword>
<keyword id="KW-0157">Chromophore</keyword>
<keyword id="KW-0249">Electron transport</keyword>
<keyword id="KW-0472">Membrane</keyword>
<keyword id="KW-0488">Methylation</keyword>
<keyword id="KW-0602">Photosynthesis</keyword>
<keyword id="KW-0605">Phycobilisome</keyword>
<keyword id="KW-1185">Reference proteome</keyword>
<keyword id="KW-0793">Thylakoid</keyword>
<keyword id="KW-0813">Transport</keyword>
<proteinExistence type="inferred from homology"/>
<gene>
    <name type="primary">apcA2</name>
    <name type="ordered locus">all0450</name>
</gene>